<feature type="chain" id="PRO_0000371924" description="NADH-quinone oxidoreductase subunit D">
    <location>
        <begin position="1"/>
        <end position="451"/>
    </location>
</feature>
<dbReference type="EC" id="7.1.1.-" evidence="1"/>
<dbReference type="EMBL" id="CP000159">
    <property type="protein sequence ID" value="ABC45183.1"/>
    <property type="molecule type" value="Genomic_DNA"/>
</dbReference>
<dbReference type="RefSeq" id="WP_011403174.1">
    <property type="nucleotide sequence ID" value="NC_007677.1"/>
</dbReference>
<dbReference type="RefSeq" id="YP_444541.1">
    <property type="nucleotide sequence ID" value="NC_007677.1"/>
</dbReference>
<dbReference type="SMR" id="Q2S5J0"/>
<dbReference type="STRING" id="309807.SRU_0396"/>
<dbReference type="EnsemblBacteria" id="ABC45183">
    <property type="protein sequence ID" value="ABC45183"/>
    <property type="gene ID" value="SRU_0396"/>
</dbReference>
<dbReference type="GeneID" id="83727318"/>
<dbReference type="KEGG" id="sru:SRU_0396"/>
<dbReference type="PATRIC" id="fig|309807.25.peg.415"/>
<dbReference type="eggNOG" id="COG0649">
    <property type="taxonomic scope" value="Bacteria"/>
</dbReference>
<dbReference type="HOGENOM" id="CLU_015134_1_2_10"/>
<dbReference type="OrthoDB" id="9801496at2"/>
<dbReference type="Proteomes" id="UP000008674">
    <property type="component" value="Chromosome"/>
</dbReference>
<dbReference type="GO" id="GO:0005886">
    <property type="term" value="C:plasma membrane"/>
    <property type="evidence" value="ECO:0007669"/>
    <property type="project" value="UniProtKB-SubCell"/>
</dbReference>
<dbReference type="GO" id="GO:0051287">
    <property type="term" value="F:NAD binding"/>
    <property type="evidence" value="ECO:0007669"/>
    <property type="project" value="InterPro"/>
</dbReference>
<dbReference type="GO" id="GO:0050136">
    <property type="term" value="F:NADH:ubiquinone reductase (non-electrogenic) activity"/>
    <property type="evidence" value="ECO:0007669"/>
    <property type="project" value="UniProtKB-UniRule"/>
</dbReference>
<dbReference type="GO" id="GO:0048038">
    <property type="term" value="F:quinone binding"/>
    <property type="evidence" value="ECO:0007669"/>
    <property type="project" value="UniProtKB-KW"/>
</dbReference>
<dbReference type="Gene3D" id="1.10.645.10">
    <property type="entry name" value="Cytochrome-c3 Hydrogenase, chain B"/>
    <property type="match status" value="1"/>
</dbReference>
<dbReference type="HAMAP" id="MF_01358">
    <property type="entry name" value="NDH1_NuoD"/>
    <property type="match status" value="1"/>
</dbReference>
<dbReference type="InterPro" id="IPR001135">
    <property type="entry name" value="NADH_Q_OxRdtase_suD"/>
</dbReference>
<dbReference type="InterPro" id="IPR014029">
    <property type="entry name" value="NADH_UbQ_OxRdtase_49kDa_CS"/>
</dbReference>
<dbReference type="InterPro" id="IPR022885">
    <property type="entry name" value="NDH1_su_D/H"/>
</dbReference>
<dbReference type="InterPro" id="IPR029014">
    <property type="entry name" value="NiFe-Hase_large"/>
</dbReference>
<dbReference type="NCBIfam" id="TIGR01962">
    <property type="entry name" value="NuoD"/>
    <property type="match status" value="1"/>
</dbReference>
<dbReference type="NCBIfam" id="NF004739">
    <property type="entry name" value="PRK06075.1"/>
    <property type="match status" value="1"/>
</dbReference>
<dbReference type="PANTHER" id="PTHR11993:SF10">
    <property type="entry name" value="NADH DEHYDROGENASE [UBIQUINONE] IRON-SULFUR PROTEIN 2, MITOCHONDRIAL"/>
    <property type="match status" value="1"/>
</dbReference>
<dbReference type="PANTHER" id="PTHR11993">
    <property type="entry name" value="NADH-UBIQUINONE OXIDOREDUCTASE 49 KDA SUBUNIT"/>
    <property type="match status" value="1"/>
</dbReference>
<dbReference type="Pfam" id="PF00346">
    <property type="entry name" value="Complex1_49kDa"/>
    <property type="match status" value="1"/>
</dbReference>
<dbReference type="SUPFAM" id="SSF56762">
    <property type="entry name" value="HydB/Nqo4-like"/>
    <property type="match status" value="1"/>
</dbReference>
<dbReference type="PROSITE" id="PS00535">
    <property type="entry name" value="COMPLEX1_49K"/>
    <property type="match status" value="1"/>
</dbReference>
<accession>Q2S5J0</accession>
<reference key="1">
    <citation type="journal article" date="2005" name="Proc. Natl. Acad. Sci. U.S.A.">
        <title>The genome of Salinibacter ruber: convergence and gene exchange among hyperhalophilic bacteria and archaea.</title>
        <authorList>
            <person name="Mongodin E.F."/>
            <person name="Nelson K.E."/>
            <person name="Daugherty S."/>
            <person name="DeBoy R.T."/>
            <person name="Wister J."/>
            <person name="Khouri H."/>
            <person name="Weidman J."/>
            <person name="Walsh D.A."/>
            <person name="Papke R.T."/>
            <person name="Sanchez Perez G."/>
            <person name="Sharma A.K."/>
            <person name="Nesbo C.L."/>
            <person name="MacLeod D."/>
            <person name="Bapteste E."/>
            <person name="Doolittle W.F."/>
            <person name="Charlebois R.L."/>
            <person name="Legault B."/>
            <person name="Rodriguez-Valera F."/>
        </authorList>
    </citation>
    <scope>NUCLEOTIDE SEQUENCE [LARGE SCALE GENOMIC DNA]</scope>
    <source>
        <strain>DSM 13855 / CECT 5946 / M31</strain>
    </source>
</reference>
<evidence type="ECO:0000255" key="1">
    <source>
        <dbReference type="HAMAP-Rule" id="MF_01358"/>
    </source>
</evidence>
<comment type="function">
    <text evidence="1">NDH-1 shuttles electrons from NADH, via FMN and iron-sulfur (Fe-S) centers, to quinones in the respiratory chain. The immediate electron acceptor for the enzyme in this species is believed to be a menaquinone. Couples the redox reaction to proton translocation (for every two electrons transferred, four hydrogen ions are translocated across the cytoplasmic membrane), and thus conserves the redox energy in a proton gradient.</text>
</comment>
<comment type="catalytic activity">
    <reaction evidence="1">
        <text>a quinone + NADH + 5 H(+)(in) = a quinol + NAD(+) + 4 H(+)(out)</text>
        <dbReference type="Rhea" id="RHEA:57888"/>
        <dbReference type="ChEBI" id="CHEBI:15378"/>
        <dbReference type="ChEBI" id="CHEBI:24646"/>
        <dbReference type="ChEBI" id="CHEBI:57540"/>
        <dbReference type="ChEBI" id="CHEBI:57945"/>
        <dbReference type="ChEBI" id="CHEBI:132124"/>
    </reaction>
</comment>
<comment type="subunit">
    <text evidence="1">NDH-1 is composed of 14 different subunits. Subunits NuoB, C, D, E, F, and G constitute the peripheral sector of the complex.</text>
</comment>
<comment type="subcellular location">
    <subcellularLocation>
        <location evidence="1">Cell inner membrane</location>
        <topology evidence="1">Peripheral membrane protein</topology>
        <orientation evidence="1">Cytoplasmic side</orientation>
    </subcellularLocation>
</comment>
<comment type="similarity">
    <text evidence="1">Belongs to the complex I 49 kDa subunit family.</text>
</comment>
<proteinExistence type="inferred from homology"/>
<protein>
    <recommendedName>
        <fullName evidence="1">NADH-quinone oxidoreductase subunit D</fullName>
        <ecNumber evidence="1">7.1.1.-</ecNumber>
    </recommendedName>
    <alternativeName>
        <fullName evidence="1">NADH dehydrogenase I subunit D</fullName>
    </alternativeName>
    <alternativeName>
        <fullName evidence="1">NDH-1 subunit D</fullName>
    </alternativeName>
</protein>
<keyword id="KW-0997">Cell inner membrane</keyword>
<keyword id="KW-1003">Cell membrane</keyword>
<keyword id="KW-0472">Membrane</keyword>
<keyword id="KW-0520">NAD</keyword>
<keyword id="KW-0874">Quinone</keyword>
<keyword id="KW-1185">Reference proteome</keyword>
<keyword id="KW-1278">Translocase</keyword>
<keyword id="KW-0813">Transport</keyword>
<organism>
    <name type="scientific">Salinibacter ruber (strain DSM 13855 / M31)</name>
    <dbReference type="NCBI Taxonomy" id="309807"/>
    <lineage>
        <taxon>Bacteria</taxon>
        <taxon>Pseudomonadati</taxon>
        <taxon>Rhodothermota</taxon>
        <taxon>Rhodothermia</taxon>
        <taxon>Rhodothermales</taxon>
        <taxon>Salinibacteraceae</taxon>
        <taxon>Salinibacter</taxon>
    </lineage>
</organism>
<sequence>MPQTQKPDFPGNDLGDQFRFWPKHNEKIYERLENKHAWLEEKRAAAQGDGKPPATQRSEVDPLENEMILNIGPQHPATHGVLRCVVKMDGETIEKSVLDIGYLHRGIEKLAEHKTYQEFMPYTDRMDYLSPYSNNVAWCLAVEKLADIEVPERAQWIRMIMSELARISSHCLWLGVGMMDAGAVSGFVWTFQEREEIYSIMDEVAGARFTVSHSRIGGVANDFSPRAIEMIRDFVDTFPDRIAGWEGLLNKNRIWVERNKGVGRVTKEEALELGLTGPNLRGSGVPYDVRRFEPYLKYDEVDFTIPVREEGDCLARYFLRLDEMKQSVRIIEQCLDRMTEGPIRSDDAKEAYPSKEEVYYSMEGMIHDFMYTDVGTVPPKGAHSYHAIEGPKGELGFYLTSDGTGRPWRVRINAPSFTNLQAMEHMLEGEMVADTVVIIGSLDPVMGEADK</sequence>
<name>NUOD_SALRD</name>
<gene>
    <name evidence="1" type="primary">nuoD</name>
    <name type="ordered locus">SRU_0396</name>
</gene>